<comment type="function">
    <text evidence="2 3">Molecular chaperone implicated in a wide variety of cellular processes, including protection of the proteome from stress, folding and transport of newly synthesized polypeptides, chaperone-mediated autophagy, activation of proteolysis of misfolded proteins, formation and dissociation of protein complexes, and antigen presentation. Plays a pivotal role in the protein quality control system, ensuring the correct folding of proteins, the re-folding of misfolded proteins and controlling the targeting of proteins for subsequent degradation. This is achieved through cycles of ATP binding, ATP hydrolysis and ADP release, mediated by co-chaperones. The co-chaperones have been shown to not only regulate different steps of the ATPase cycle of HSP70, but they also have an individual specificity such that one co-chaperone may promote folding of a substrate while another may promote degradation. The affinity of HSP70 for polypeptides is regulated by its nucleotide bound state. In the ATP-bound form, it has a low affinity for substrate proteins. However, upon hydrolysis of the ATP to ADP, it undergoes a conformational change that increases its affinity for substrate proteins. HSP70 goes through repeated cycles of ATP hydrolysis and nucleotide exchange, which permits cycles of substrate binding and release. The HSP70-associated co-chaperones are of three types: J-domain co-chaperones HSP40s (stimulate ATPase hydrolysis by HSP70), the nucleotide exchange factors (NEF) such as BAG1/2/3 (facilitate conversion of HSP70 from the ADP-bound to the ATP-bound state thereby promoting substrate release), and the TPR domain chaperones such as HOPX and STUB1. Plays a critical role in mitochondrial import, delivers preproteins to the mitochondrial import receptor TOMM70. Acts as a repressor of transcriptional activation. Inhibits the transcriptional coactivator activity of CITED1 on Smad-mediated transcription. Component of the PRP19-CDC5L complex that forms an integral part of the spliceosome and is required for activating pre-mRNA splicing. May have a scaffolding role in the spliceosome assembly as it contacts all other components of the core complex. Binds bacterial lipopolysaccharide (LPS) and mediates LPS-induced inflammatory response, including TNF secretion by monocytes. Substrate recognition component in chaperone-mediated autophagy (CMA), a selective protein degradation process that mediates degradation of proteins with a -KFERQ motif: HSPA8/HSC70 specifically recognizes and binds cytosolic proteins bearing a -KFERQ motif and promotes their recruitment to the surface of the lysosome where they bind to lysosomal protein LAMP2. KFERQ motif-containing proteins are eventually transported into the lysosomal lumen where they are degraded. In conjunction with LAMP2, facilitates MHC class II presentation of cytoplasmic antigens by guiding antigens to the lysosomal membrane for interaction with LAMP2 which then elicits MHC class II presentation of peptides to the cell membrane. Participates in the ER-associated degradation (ERAD) quality control pathway in conjunction with J domain-containing co-chaperones and the E3 ligase STUB1. It is recruited to clathrin-coated vesicles through its interaction with DNAJC6 leading to activation of HSPA8/HSC70 ATPase activity and therefore uncoating of clathrin-coated vesicles (By similarity).</text>
</comment>
<comment type="catalytic activity">
    <reaction evidence="2">
        <text>ATP + H2O = ADP + phosphate + H(+)</text>
        <dbReference type="Rhea" id="RHEA:13065"/>
        <dbReference type="ChEBI" id="CHEBI:15377"/>
        <dbReference type="ChEBI" id="CHEBI:15378"/>
        <dbReference type="ChEBI" id="CHEBI:30616"/>
        <dbReference type="ChEBI" id="CHEBI:43474"/>
        <dbReference type="ChEBI" id="CHEBI:456216"/>
        <dbReference type="EC" id="3.6.4.10"/>
    </reaction>
</comment>
<comment type="subunit">
    <text evidence="2 3 4 5">Component of the chaperone-assisted selective autophagy (CASA) complex consisting of BAG3, HSPA8/HSC70, HSPB8 and STUB1/CHIP (By similarity). Identified in a IGF2BP1-dependent mRNP granule complex containing untranslated mRNAs (By similarity). Interacts with PACRG (By similarity). Interacts with HSPH1/HSP105 (By similarity). Interacts with IRAK1BP1 and BAG1 (By similarity). Interacts with DNAJC7 (By similarity). Interacts with DNAJB12 (via J domain) (By similarity). Interacts with DNAJB14 (via J domain) (By similarity). Interacts (via C-terminus) with the E3 ligase STUB1 forming a 210 kDa complex of one STUB1 and two HSPA8 molecules (By similarity). Interacts with CITED1 (via N-terminus); the interaction suppresses the association of CITED1 to p300/CBP and Smad-mediated transcription transactivation (By similarity). Component of the PRP19-CDC5L splicing complex composed of a core complex comprising a homotetramer of PRPF19, CDC5L, PLRG1 and BCAS2, and at least three less stably associated proteins CTNNBL1, CWC15 and HSPA8 (By similarity). Interacts with TRIM5 (By similarity). Part of a complex composed at least of ASH2L, EMSY, HCFC1, HSPA8, CCAR2, MATR3, MKI67, RBBP5, TUBB2A, WDR5 and ZNF335; this complex may have a histone H3-specific methyltransferase activity (By similarity). Interacts with METTL21A (By similarity). Following LPS binding, may form a complex with CXCR4, GDF5 and HSP90AA1 (By similarity). Interacts with PRKN (By similarity). Interacts with FOXP3 (By similarity). Interacts with DNAJC9 (via J domain) (By similarity). Interacts with MLLT11 (By similarity). Interacts with RNF207 (By similarity). Interacts with DNAJC21 (By similarity). Interacts with DNAJB2 (By similarity). Interacts with TTC1 (via TPR repeats) (By similarity). Interacts with SGTA (via TPR repeats) (By similarity). Interacts with HSF1 (via transactivation domain) (By similarity). Interacts with HOPX, STUB1, HSP40, HSP901, BAG2 and BAG3 (By similarity). Interacts with HSPC138 (By similarity). Interacts with ZMYND10 (By similarity). Interacts with VGF-derived peptide TLQP-21 (By similarity). Interacts with BCL2L1, GIMAP5 and MCL1; the interaction with BCL2L1 or MCL1 is impaired in the absence of GIMAP5 (By similarity). Interacts with NLPR12 (By similarity). Interacts with TTC4 (By similarity). Interacts with TOMM70; the interaction is required for preprotein mitochondrial import (By similarity). May interact with DNJC9; the interaction seems to be histone-dependent (By similarity). Interacts with BAG5 and JPH2; the interaction with JPH2 is increased in the presence of BAG5 (By similarity). Interacts with DNAJC6 (via J domain) in an ATP-dependent manner; this interaction stimulates the HSPA8's ATPase activity. Forms a complex composed of HSPA8, CLTC and DNAJC6 (By similarity). Interacts with HSPA8; this interaction modulates migratory and antigen-presenting capacities of dendritic cells (By similarity).</text>
</comment>
<comment type="subcellular location">
    <subcellularLocation>
        <location evidence="2">Cytoplasm</location>
    </subcellularLocation>
    <subcellularLocation>
        <location evidence="2">Melanosome</location>
    </subcellularLocation>
    <subcellularLocation>
        <location evidence="2">Nucleus</location>
        <location evidence="2">Nucleolus</location>
    </subcellularLocation>
    <subcellularLocation>
        <location evidence="2">Cell membrane</location>
    </subcellularLocation>
    <subcellularLocation>
        <location evidence="2">Lysosome membrane</location>
        <topology evidence="2">Peripheral membrane protein</topology>
        <orientation evidence="2">Cytoplasmic side</orientation>
    </subcellularLocation>
    <text evidence="2">Localized in cytoplasmic mRNP granules containing untranslated mRNAs. Translocates rapidly from the cytoplasm to the nuclei, and especially to the nucleoli, upon heat shock.</text>
</comment>
<comment type="induction">
    <text>Constitutively synthesized.</text>
</comment>
<comment type="domain">
    <text evidence="2">The N-terminal nucleotide binding domain (NBD) (also known as the ATPase domain) is responsible for binding and hydrolyzing ATP. The C-terminal substrate-binding domain (SBD) (also known as peptide-binding domain) binds to the client/substrate proteins. The two domains are allosterically coupled so that, when ATP is bound to the NBD, the SBD binds relatively weakly to clients. When ADP is bound in the NBD, a conformational change enhances the affinity of the SBD for client proteins.</text>
</comment>
<comment type="PTM">
    <text evidence="2">Acetylated.</text>
</comment>
<comment type="PTM">
    <text evidence="2">ISGylated.</text>
</comment>
<comment type="PTM">
    <text evidence="2">Trimethylation at Lys-561 reduces fibrillar SNCA binding.</text>
</comment>
<comment type="similarity">
    <text evidence="7">Belongs to the heat shock protein 70 family.</text>
</comment>
<reference key="1">
    <citation type="journal article" date="1990" name="Mol. Cell. Biol.">
        <title>Identification of a protein altered in mutants resistant to microtubule inhibitors as a member of the major heat shock protein (hsp70) family.</title>
        <authorList>
            <person name="Ahmad S."/>
            <person name="Ahuja R."/>
            <person name="Venner T.J."/>
            <person name="Gupta R.S."/>
        </authorList>
    </citation>
    <scope>NUCLEOTIDE SEQUENCE [MRNA]</scope>
</reference>
<dbReference type="EC" id="3.6.4.10" evidence="2"/>
<dbReference type="EMBL" id="M34561">
    <property type="protein sequence ID" value="AAA36991.1"/>
    <property type="molecule type" value="mRNA"/>
</dbReference>
<dbReference type="PIR" id="A35922">
    <property type="entry name" value="A35922"/>
</dbReference>
<dbReference type="RefSeq" id="NP_001233658.1">
    <property type="nucleotide sequence ID" value="NM_001246729.1"/>
</dbReference>
<dbReference type="BMRB" id="P19378"/>
<dbReference type="SMR" id="P19378"/>
<dbReference type="IntAct" id="P19378">
    <property type="interactions" value="1"/>
</dbReference>
<dbReference type="PaxDb" id="10029-NP_001233658.1"/>
<dbReference type="GeneID" id="100689472"/>
<dbReference type="KEGG" id="cge:100689472"/>
<dbReference type="CTD" id="3312"/>
<dbReference type="eggNOG" id="KOG0101">
    <property type="taxonomic scope" value="Eukaryota"/>
</dbReference>
<dbReference type="OrthoDB" id="2401965at2759"/>
<dbReference type="PRO" id="PR:P19378"/>
<dbReference type="Proteomes" id="UP000694386">
    <property type="component" value="Unplaced"/>
</dbReference>
<dbReference type="Proteomes" id="UP001108280">
    <property type="component" value="Chromosome 4"/>
</dbReference>
<dbReference type="GO" id="GO:0005765">
    <property type="term" value="C:lysosomal membrane"/>
    <property type="evidence" value="ECO:0000250"/>
    <property type="project" value="UniProtKB"/>
</dbReference>
<dbReference type="GO" id="GO:0042470">
    <property type="term" value="C:melanosome"/>
    <property type="evidence" value="ECO:0007669"/>
    <property type="project" value="UniProtKB-SubCell"/>
</dbReference>
<dbReference type="GO" id="GO:0005730">
    <property type="term" value="C:nucleolus"/>
    <property type="evidence" value="ECO:0007669"/>
    <property type="project" value="UniProtKB-SubCell"/>
</dbReference>
<dbReference type="GO" id="GO:0005634">
    <property type="term" value="C:nucleus"/>
    <property type="evidence" value="ECO:0000250"/>
    <property type="project" value="UniProtKB"/>
</dbReference>
<dbReference type="GO" id="GO:0005886">
    <property type="term" value="C:plasma membrane"/>
    <property type="evidence" value="ECO:0007669"/>
    <property type="project" value="UniProtKB-SubCell"/>
</dbReference>
<dbReference type="GO" id="GO:0000974">
    <property type="term" value="C:Prp19 complex"/>
    <property type="evidence" value="ECO:0000250"/>
    <property type="project" value="UniProtKB"/>
</dbReference>
<dbReference type="GO" id="GO:1990904">
    <property type="term" value="C:ribonucleoprotein complex"/>
    <property type="evidence" value="ECO:0000250"/>
    <property type="project" value="UniProtKB"/>
</dbReference>
<dbReference type="GO" id="GO:0005681">
    <property type="term" value="C:spliceosomal complex"/>
    <property type="evidence" value="ECO:0007669"/>
    <property type="project" value="UniProtKB-KW"/>
</dbReference>
<dbReference type="GO" id="GO:0005524">
    <property type="term" value="F:ATP binding"/>
    <property type="evidence" value="ECO:0007669"/>
    <property type="project" value="UniProtKB-KW"/>
</dbReference>
<dbReference type="GO" id="GO:0140662">
    <property type="term" value="F:ATP-dependent protein folding chaperone"/>
    <property type="evidence" value="ECO:0007669"/>
    <property type="project" value="InterPro"/>
</dbReference>
<dbReference type="GO" id="GO:0016787">
    <property type="term" value="F:hydrolase activity"/>
    <property type="evidence" value="ECO:0007669"/>
    <property type="project" value="UniProtKB-KW"/>
</dbReference>
<dbReference type="GO" id="GO:0030674">
    <property type="term" value="F:protein-macromolecule adaptor activity"/>
    <property type="evidence" value="ECO:0000250"/>
    <property type="project" value="UniProtKB"/>
</dbReference>
<dbReference type="GO" id="GO:0072318">
    <property type="term" value="P:clathrin coat disassembly"/>
    <property type="evidence" value="ECO:0000314"/>
    <property type="project" value="UniProtKB"/>
</dbReference>
<dbReference type="GO" id="GO:0006397">
    <property type="term" value="P:mRNA processing"/>
    <property type="evidence" value="ECO:0007669"/>
    <property type="project" value="UniProtKB-KW"/>
</dbReference>
<dbReference type="GO" id="GO:0045892">
    <property type="term" value="P:negative regulation of DNA-templated transcription"/>
    <property type="evidence" value="ECO:0000250"/>
    <property type="project" value="UniProtKB"/>
</dbReference>
<dbReference type="GO" id="GO:0061740">
    <property type="term" value="P:protein targeting to lysosome involved in chaperone-mediated autophagy"/>
    <property type="evidence" value="ECO:0000250"/>
    <property type="project" value="UniProtKB"/>
</dbReference>
<dbReference type="GO" id="GO:0008380">
    <property type="term" value="P:RNA splicing"/>
    <property type="evidence" value="ECO:0007669"/>
    <property type="project" value="UniProtKB-KW"/>
</dbReference>
<dbReference type="CDD" id="cd10233">
    <property type="entry name" value="ASKHA_NBD_HSP70_HSPA1"/>
    <property type="match status" value="1"/>
</dbReference>
<dbReference type="FunFam" id="2.60.34.10:FF:000002">
    <property type="entry name" value="Heat shock 70 kDa"/>
    <property type="match status" value="1"/>
</dbReference>
<dbReference type="FunFam" id="3.30.420.40:FF:000172">
    <property type="entry name" value="Heat shock 70 kDa protein"/>
    <property type="match status" value="1"/>
</dbReference>
<dbReference type="FunFam" id="3.30.30.30:FF:000001">
    <property type="entry name" value="heat shock 70 kDa protein-like"/>
    <property type="match status" value="1"/>
</dbReference>
<dbReference type="FunFam" id="3.30.420.40:FF:000028">
    <property type="entry name" value="heat shock 70 kDa protein-like"/>
    <property type="match status" value="1"/>
</dbReference>
<dbReference type="FunFam" id="3.30.420.40:FF:000135">
    <property type="entry name" value="Heat shock cognate 71 kDa protein"/>
    <property type="match status" value="1"/>
</dbReference>
<dbReference type="FunFam" id="3.90.640.10:FF:000134">
    <property type="entry name" value="Heat shock cognate 71 kDa protein"/>
    <property type="match status" value="1"/>
</dbReference>
<dbReference type="FunFam" id="1.20.1270.10:FF:000003">
    <property type="entry name" value="heat shock cognate 71 kDa protein-like"/>
    <property type="match status" value="1"/>
</dbReference>
<dbReference type="FunFam" id="3.30.420.40:FF:000026">
    <property type="entry name" value="Heat shock protein 70"/>
    <property type="match status" value="1"/>
</dbReference>
<dbReference type="Gene3D" id="1.20.1270.10">
    <property type="match status" value="1"/>
</dbReference>
<dbReference type="Gene3D" id="3.30.30.30">
    <property type="match status" value="1"/>
</dbReference>
<dbReference type="Gene3D" id="3.30.420.40">
    <property type="match status" value="2"/>
</dbReference>
<dbReference type="Gene3D" id="3.90.640.10">
    <property type="entry name" value="Actin, Chain A, domain 4"/>
    <property type="match status" value="1"/>
</dbReference>
<dbReference type="Gene3D" id="2.60.34.10">
    <property type="entry name" value="Substrate Binding Domain Of DNAk, Chain A, domain 1"/>
    <property type="match status" value="1"/>
</dbReference>
<dbReference type="InterPro" id="IPR043129">
    <property type="entry name" value="ATPase_NBD"/>
</dbReference>
<dbReference type="InterPro" id="IPR018181">
    <property type="entry name" value="Heat_shock_70_CS"/>
</dbReference>
<dbReference type="InterPro" id="IPR029048">
    <property type="entry name" value="HSP70_C_sf"/>
</dbReference>
<dbReference type="InterPro" id="IPR029047">
    <property type="entry name" value="HSP70_peptide-bd_sf"/>
</dbReference>
<dbReference type="InterPro" id="IPR013126">
    <property type="entry name" value="Hsp_70_fam"/>
</dbReference>
<dbReference type="NCBIfam" id="NF001413">
    <property type="entry name" value="PRK00290.1"/>
    <property type="match status" value="1"/>
</dbReference>
<dbReference type="PANTHER" id="PTHR19375">
    <property type="entry name" value="HEAT SHOCK PROTEIN 70KDA"/>
    <property type="match status" value="1"/>
</dbReference>
<dbReference type="Pfam" id="PF00012">
    <property type="entry name" value="HSP70"/>
    <property type="match status" value="1"/>
</dbReference>
<dbReference type="PRINTS" id="PR00301">
    <property type="entry name" value="HEATSHOCK70"/>
</dbReference>
<dbReference type="SUPFAM" id="SSF53067">
    <property type="entry name" value="Actin-like ATPase domain"/>
    <property type="match status" value="2"/>
</dbReference>
<dbReference type="SUPFAM" id="SSF100934">
    <property type="entry name" value="Heat shock protein 70kD (HSP70), C-terminal subdomain"/>
    <property type="match status" value="1"/>
</dbReference>
<dbReference type="SUPFAM" id="SSF100920">
    <property type="entry name" value="Heat shock protein 70kD (HSP70), peptide-binding domain"/>
    <property type="match status" value="1"/>
</dbReference>
<dbReference type="PROSITE" id="PS00297">
    <property type="entry name" value="HSP70_1"/>
    <property type="match status" value="1"/>
</dbReference>
<dbReference type="PROSITE" id="PS00329">
    <property type="entry name" value="HSP70_2"/>
    <property type="match status" value="1"/>
</dbReference>
<dbReference type="PROSITE" id="PS01036">
    <property type="entry name" value="HSP70_3"/>
    <property type="match status" value="1"/>
</dbReference>
<evidence type="ECO:0000250" key="1"/>
<evidence type="ECO:0000250" key="2">
    <source>
        <dbReference type="UniProtKB" id="P11142"/>
    </source>
</evidence>
<evidence type="ECO:0000250" key="3">
    <source>
        <dbReference type="UniProtKB" id="P19120"/>
    </source>
</evidence>
<evidence type="ECO:0000250" key="4">
    <source>
        <dbReference type="UniProtKB" id="P63017"/>
    </source>
</evidence>
<evidence type="ECO:0000250" key="5">
    <source>
        <dbReference type="UniProtKB" id="P63018"/>
    </source>
</evidence>
<evidence type="ECO:0000256" key="6">
    <source>
        <dbReference type="SAM" id="MobiDB-lite"/>
    </source>
</evidence>
<evidence type="ECO:0000305" key="7"/>
<organism>
    <name type="scientific">Cricetulus griseus</name>
    <name type="common">Chinese hamster</name>
    <name type="synonym">Cricetulus barabensis griseus</name>
    <dbReference type="NCBI Taxonomy" id="10029"/>
    <lineage>
        <taxon>Eukaryota</taxon>
        <taxon>Metazoa</taxon>
        <taxon>Chordata</taxon>
        <taxon>Craniata</taxon>
        <taxon>Vertebrata</taxon>
        <taxon>Euteleostomi</taxon>
        <taxon>Mammalia</taxon>
        <taxon>Eutheria</taxon>
        <taxon>Euarchontoglires</taxon>
        <taxon>Glires</taxon>
        <taxon>Rodentia</taxon>
        <taxon>Myomorpha</taxon>
        <taxon>Muroidea</taxon>
        <taxon>Cricetidae</taxon>
        <taxon>Cricetinae</taxon>
        <taxon>Cricetulus</taxon>
    </lineage>
</organism>
<feature type="initiator methionine" description="Removed" evidence="2">
    <location>
        <position position="1"/>
    </location>
</feature>
<feature type="chain" id="PRO_0000078269" description="Heat shock cognate 71 kDa protein">
    <location>
        <begin position="2"/>
        <end position="646"/>
    </location>
</feature>
<feature type="region of interest" description="Nucleotide-binding domain (NBD)" evidence="2">
    <location>
        <begin position="2"/>
        <end position="386"/>
    </location>
</feature>
<feature type="region of interest" description="Interaction with BAG1" evidence="1">
    <location>
        <begin position="186"/>
        <end position="377"/>
    </location>
</feature>
<feature type="region of interest" description="Substrate-binding domain (SBD)" evidence="2">
    <location>
        <begin position="394"/>
        <end position="509"/>
    </location>
</feature>
<feature type="region of interest" description="Disordered" evidence="6">
    <location>
        <begin position="614"/>
        <end position="646"/>
    </location>
</feature>
<feature type="compositionally biased region" description="Gly residues" evidence="6">
    <location>
        <begin position="616"/>
        <end position="632"/>
    </location>
</feature>
<feature type="binding site" evidence="3">
    <location>
        <position position="14"/>
    </location>
    <ligand>
        <name>ADP</name>
        <dbReference type="ChEBI" id="CHEBI:456216"/>
    </ligand>
</feature>
<feature type="binding site" evidence="3">
    <location>
        <position position="15"/>
    </location>
    <ligand>
        <name>ADP</name>
        <dbReference type="ChEBI" id="CHEBI:456216"/>
    </ligand>
</feature>
<feature type="binding site" evidence="3">
    <location>
        <position position="202"/>
    </location>
    <ligand>
        <name>ADP</name>
        <dbReference type="ChEBI" id="CHEBI:456216"/>
    </ligand>
</feature>
<feature type="binding site" evidence="3">
    <location>
        <position position="268"/>
    </location>
    <ligand>
        <name>ADP</name>
        <dbReference type="ChEBI" id="CHEBI:456216"/>
    </ligand>
</feature>
<feature type="binding site" evidence="3">
    <location>
        <position position="271"/>
    </location>
    <ligand>
        <name>ADP</name>
        <dbReference type="ChEBI" id="CHEBI:456216"/>
    </ligand>
</feature>
<feature type="binding site" evidence="3">
    <location>
        <position position="275"/>
    </location>
    <ligand>
        <name>ADP</name>
        <dbReference type="ChEBI" id="CHEBI:456216"/>
    </ligand>
</feature>
<feature type="binding site" evidence="3">
    <location>
        <position position="339"/>
    </location>
    <ligand>
        <name>ADP</name>
        <dbReference type="ChEBI" id="CHEBI:456216"/>
    </ligand>
</feature>
<feature type="modified residue" description="N-acetylserine" evidence="2">
    <location>
        <position position="2"/>
    </location>
</feature>
<feature type="modified residue" description="N6-acetyllysine" evidence="4">
    <location>
        <position position="108"/>
    </location>
</feature>
<feature type="modified residue" description="Phosphoserine" evidence="2">
    <location>
        <position position="153"/>
    </location>
</feature>
<feature type="modified residue" description="N6-acetyllysine" evidence="2">
    <location>
        <position position="246"/>
    </location>
</feature>
<feature type="modified residue" description="N6-acetyllysine; alternate" evidence="2">
    <location>
        <position position="319"/>
    </location>
</feature>
<feature type="modified residue" description="N6-succinyllysine; alternate" evidence="4">
    <location>
        <position position="319"/>
    </location>
</feature>
<feature type="modified residue" description="N6-acetyllysine" evidence="4">
    <location>
        <position position="328"/>
    </location>
</feature>
<feature type="modified residue" description="Phosphoserine" evidence="2">
    <location>
        <position position="329"/>
    </location>
</feature>
<feature type="modified residue" description="Phosphoserine" evidence="2">
    <location>
        <position position="362"/>
    </location>
</feature>
<feature type="modified residue" description="Omega-N-methylarginine" evidence="2">
    <location>
        <position position="469"/>
    </location>
</feature>
<feature type="modified residue" description="N6-acetyllysine; alternate" evidence="4">
    <location>
        <position position="512"/>
    </location>
</feature>
<feature type="modified residue" description="N6-succinyllysine; alternate" evidence="4">
    <location>
        <position position="512"/>
    </location>
</feature>
<feature type="modified residue" description="N6-acetyllysine" evidence="4">
    <location>
        <position position="524"/>
    </location>
</feature>
<feature type="modified residue" description="Phosphoserine" evidence="2">
    <location>
        <position position="541"/>
    </location>
</feature>
<feature type="modified residue" description="N6,N6,N6-trimethyllysine; by METTL21A; in vitro" evidence="2">
    <location>
        <position position="561"/>
    </location>
</feature>
<feature type="modified residue" description="N6,N6-dimethyllysine" evidence="2">
    <location>
        <position position="561"/>
    </location>
</feature>
<feature type="modified residue" description="N6-acetyllysine" evidence="2">
    <location>
        <position position="589"/>
    </location>
</feature>
<feature type="modified residue" description="N6-acetyllysine" evidence="2">
    <location>
        <position position="597"/>
    </location>
</feature>
<feature type="modified residue" description="N6-acetyllysine" evidence="2">
    <location>
        <position position="601"/>
    </location>
</feature>
<feature type="cross-link" description="Glycyl lysine isopeptide (Lys-Gly) (interchain with G-Cter in SUMO1); alternate" evidence="2">
    <location>
        <position position="512"/>
    </location>
</feature>
<feature type="cross-link" description="Glycyl lysine isopeptide (Lys-Gly) (interchain with G-Cter in SUMO2); alternate" evidence="2">
    <location>
        <position position="512"/>
    </location>
</feature>
<protein>
    <recommendedName>
        <fullName evidence="2">Heat shock cognate 71 kDa protein</fullName>
        <ecNumber evidence="2">3.6.4.10</ecNumber>
    </recommendedName>
    <alternativeName>
        <fullName>Heat shock 70 kDa protein 8</fullName>
    </alternativeName>
</protein>
<keyword id="KW-0007">Acetylation</keyword>
<keyword id="KW-0067">ATP-binding</keyword>
<keyword id="KW-0072">Autophagy</keyword>
<keyword id="KW-1003">Cell membrane</keyword>
<keyword id="KW-0143">Chaperone</keyword>
<keyword id="KW-0963">Cytoplasm</keyword>
<keyword id="KW-0378">Hydrolase</keyword>
<keyword id="KW-1017">Isopeptide bond</keyword>
<keyword id="KW-0458">Lysosome</keyword>
<keyword id="KW-0472">Membrane</keyword>
<keyword id="KW-0488">Methylation</keyword>
<keyword id="KW-0507">mRNA processing</keyword>
<keyword id="KW-0508">mRNA splicing</keyword>
<keyword id="KW-0547">Nucleotide-binding</keyword>
<keyword id="KW-0539">Nucleus</keyword>
<keyword id="KW-0597">Phosphoprotein</keyword>
<keyword id="KW-0678">Repressor</keyword>
<keyword id="KW-0747">Spliceosome</keyword>
<keyword id="KW-0346">Stress response</keyword>
<keyword id="KW-0804">Transcription</keyword>
<keyword id="KW-0805">Transcription regulation</keyword>
<keyword id="KW-0832">Ubl conjugation</keyword>
<accession>P19378</accession>
<proteinExistence type="evidence at transcript level"/>
<gene>
    <name evidence="2" type="primary">HSPA8</name>
    <name evidence="2" type="synonym">HSC70</name>
</gene>
<name>HSP7C_CRIGR</name>
<sequence>MSKGPAVGIDLGTTYSCVGVFQHGKVEIIANDQGNRTTPSYVAFTDTERLIGDAAKNQVAMNPTNTVFDAKRLIGRRFDDAVVQSDMKHWPFMVVNDAGRPKVQVEYKGEAKSFYPEEVSSMVLTKMKEIAEAYLGKTVTNAVVTVPAYFNDSQRQATKDAGTIAGLNVLRIINEPTAAAIAYGLDKKVGAERNVLIFDLGGGTFDVSILTIEDGIFEVKSTAGDTHLGGEDFDNRMVNHFIAEFKRNDKKDISENKRAVRRLRTACERAKRTLSSSTQASIEIDSLYEGIDFYTSITRARFEELNADLFRGTLDPVEKALRDAKLDKSQIHDIVLVGGSTRIPKIQKLLQDFFNGKELNKSINPDEAVAYGAAVQAAILSGDKSENVQDLLLLDVTPLSLGIETAGGVMTVLIKRNTTIPTKQTQTFTTYSDNQPGVLIQVYEGERAMTKDNNLLGKFELTGIPPAPRGVPQIEVTFDIDANGILNVSAVDKSTGKENKITITNDKGRLSKEDIERMVQEAEKYKAEDEKQRDKVSSKNSLESYAFNMKATVEDEKLQGKINDEDKQKILDKCNEIISWLDKNQTAEKEEFEHQQKELEKVCNPIITKLYQSAGGMPGGMPGGFPGGGAPPSGGASSGPTIEEVD</sequence>